<keyword id="KW-0067">ATP-binding</keyword>
<keyword id="KW-0315">Glutamine amidotransferase</keyword>
<keyword id="KW-0436">Ligase</keyword>
<keyword id="KW-0460">Magnesium</keyword>
<keyword id="KW-0479">Metal-binding</keyword>
<keyword id="KW-0547">Nucleotide-binding</keyword>
<keyword id="KW-0665">Pyrimidine biosynthesis</keyword>
<dbReference type="EC" id="6.3.4.2" evidence="1"/>
<dbReference type="EMBL" id="CP000863">
    <property type="protein sequence ID" value="ACC57321.1"/>
    <property type="molecule type" value="Genomic_DNA"/>
</dbReference>
<dbReference type="RefSeq" id="WP_000148660.1">
    <property type="nucleotide sequence ID" value="NZ_CP031380.1"/>
</dbReference>
<dbReference type="SMR" id="B2I2A7"/>
<dbReference type="MEROPS" id="C26.964"/>
<dbReference type="KEGG" id="abc:ACICU_02009"/>
<dbReference type="HOGENOM" id="CLU_011675_5_0_6"/>
<dbReference type="UniPathway" id="UPA00159">
    <property type="reaction ID" value="UER00277"/>
</dbReference>
<dbReference type="Proteomes" id="UP000008839">
    <property type="component" value="Chromosome"/>
</dbReference>
<dbReference type="GO" id="GO:0005829">
    <property type="term" value="C:cytosol"/>
    <property type="evidence" value="ECO:0007669"/>
    <property type="project" value="TreeGrafter"/>
</dbReference>
<dbReference type="GO" id="GO:0005524">
    <property type="term" value="F:ATP binding"/>
    <property type="evidence" value="ECO:0007669"/>
    <property type="project" value="UniProtKB-KW"/>
</dbReference>
<dbReference type="GO" id="GO:0003883">
    <property type="term" value="F:CTP synthase activity"/>
    <property type="evidence" value="ECO:0007669"/>
    <property type="project" value="UniProtKB-UniRule"/>
</dbReference>
<dbReference type="GO" id="GO:0004359">
    <property type="term" value="F:glutaminase activity"/>
    <property type="evidence" value="ECO:0007669"/>
    <property type="project" value="RHEA"/>
</dbReference>
<dbReference type="GO" id="GO:0042802">
    <property type="term" value="F:identical protein binding"/>
    <property type="evidence" value="ECO:0007669"/>
    <property type="project" value="TreeGrafter"/>
</dbReference>
<dbReference type="GO" id="GO:0046872">
    <property type="term" value="F:metal ion binding"/>
    <property type="evidence" value="ECO:0007669"/>
    <property type="project" value="UniProtKB-KW"/>
</dbReference>
<dbReference type="GO" id="GO:0044210">
    <property type="term" value="P:'de novo' CTP biosynthetic process"/>
    <property type="evidence" value="ECO:0007669"/>
    <property type="project" value="UniProtKB-UniRule"/>
</dbReference>
<dbReference type="GO" id="GO:0019856">
    <property type="term" value="P:pyrimidine nucleobase biosynthetic process"/>
    <property type="evidence" value="ECO:0007669"/>
    <property type="project" value="TreeGrafter"/>
</dbReference>
<dbReference type="CDD" id="cd03113">
    <property type="entry name" value="CTPS_N"/>
    <property type="match status" value="1"/>
</dbReference>
<dbReference type="CDD" id="cd01746">
    <property type="entry name" value="GATase1_CTP_Synthase"/>
    <property type="match status" value="1"/>
</dbReference>
<dbReference type="FunFam" id="3.40.50.300:FF:000009">
    <property type="entry name" value="CTP synthase"/>
    <property type="match status" value="1"/>
</dbReference>
<dbReference type="FunFam" id="3.40.50.880:FF:000002">
    <property type="entry name" value="CTP synthase"/>
    <property type="match status" value="1"/>
</dbReference>
<dbReference type="Gene3D" id="3.40.50.880">
    <property type="match status" value="1"/>
</dbReference>
<dbReference type="Gene3D" id="3.40.50.300">
    <property type="entry name" value="P-loop containing nucleotide triphosphate hydrolases"/>
    <property type="match status" value="1"/>
</dbReference>
<dbReference type="HAMAP" id="MF_01227">
    <property type="entry name" value="PyrG"/>
    <property type="match status" value="1"/>
</dbReference>
<dbReference type="InterPro" id="IPR029062">
    <property type="entry name" value="Class_I_gatase-like"/>
</dbReference>
<dbReference type="InterPro" id="IPR004468">
    <property type="entry name" value="CTP_synthase"/>
</dbReference>
<dbReference type="InterPro" id="IPR017456">
    <property type="entry name" value="CTP_synthase_N"/>
</dbReference>
<dbReference type="InterPro" id="IPR017926">
    <property type="entry name" value="GATASE"/>
</dbReference>
<dbReference type="InterPro" id="IPR033828">
    <property type="entry name" value="GATase1_CTP_Synthase"/>
</dbReference>
<dbReference type="InterPro" id="IPR027417">
    <property type="entry name" value="P-loop_NTPase"/>
</dbReference>
<dbReference type="NCBIfam" id="NF003792">
    <property type="entry name" value="PRK05380.1"/>
    <property type="match status" value="1"/>
</dbReference>
<dbReference type="NCBIfam" id="TIGR00337">
    <property type="entry name" value="PyrG"/>
    <property type="match status" value="1"/>
</dbReference>
<dbReference type="PANTHER" id="PTHR11550">
    <property type="entry name" value="CTP SYNTHASE"/>
    <property type="match status" value="1"/>
</dbReference>
<dbReference type="PANTHER" id="PTHR11550:SF0">
    <property type="entry name" value="CTP SYNTHASE-RELATED"/>
    <property type="match status" value="1"/>
</dbReference>
<dbReference type="Pfam" id="PF06418">
    <property type="entry name" value="CTP_synth_N"/>
    <property type="match status" value="1"/>
</dbReference>
<dbReference type="Pfam" id="PF00117">
    <property type="entry name" value="GATase"/>
    <property type="match status" value="1"/>
</dbReference>
<dbReference type="SUPFAM" id="SSF52317">
    <property type="entry name" value="Class I glutamine amidotransferase-like"/>
    <property type="match status" value="1"/>
</dbReference>
<dbReference type="SUPFAM" id="SSF52540">
    <property type="entry name" value="P-loop containing nucleoside triphosphate hydrolases"/>
    <property type="match status" value="1"/>
</dbReference>
<dbReference type="PROSITE" id="PS51273">
    <property type="entry name" value="GATASE_TYPE_1"/>
    <property type="match status" value="1"/>
</dbReference>
<accession>B2I2A7</accession>
<organism>
    <name type="scientific">Acinetobacter baumannii (strain ACICU)</name>
    <dbReference type="NCBI Taxonomy" id="405416"/>
    <lineage>
        <taxon>Bacteria</taxon>
        <taxon>Pseudomonadati</taxon>
        <taxon>Pseudomonadota</taxon>
        <taxon>Gammaproteobacteria</taxon>
        <taxon>Moraxellales</taxon>
        <taxon>Moraxellaceae</taxon>
        <taxon>Acinetobacter</taxon>
        <taxon>Acinetobacter calcoaceticus/baumannii complex</taxon>
    </lineage>
</organism>
<protein>
    <recommendedName>
        <fullName evidence="1">CTP synthase</fullName>
        <ecNumber evidence="1">6.3.4.2</ecNumber>
    </recommendedName>
    <alternativeName>
        <fullName evidence="1">Cytidine 5'-triphosphate synthase</fullName>
    </alternativeName>
    <alternativeName>
        <fullName evidence="1">Cytidine triphosphate synthetase</fullName>
        <shortName evidence="1">CTP synthetase</shortName>
        <shortName evidence="1">CTPS</shortName>
    </alternativeName>
    <alternativeName>
        <fullName evidence="1">UTP--ammonia ligase</fullName>
    </alternativeName>
</protein>
<evidence type="ECO:0000255" key="1">
    <source>
        <dbReference type="HAMAP-Rule" id="MF_01227"/>
    </source>
</evidence>
<sequence length="545" mass="60986">MTHFIFVTGGVVSSLGKGISAASVAALLEARGLKVTMVKMDPYINVDPGTMSPFQHGEVFVTEDGAETDLDLGYYERFLRRAKMTKLNNFTSGRVYQDVLNKERRGDYLGGTVQVIPHITDNIKERVLRAGEGYDVAIVEIGGTVGDIESLPFMESVRQLMVELGHKRTMLMHLTLLPYIKSAAELKTKPTQHSVKELLSIGIQPDILICRTEYDVDADTKRKIALFTNVEARAVVVCKDAKTIYQIPRGFYEQNVDDLICERFGFTDLPEADLTDWDNVVEALLNPEYTVRVAMVGKYVELPDAYKSVNEALLHAGIKNRVKVQIDYVNAEELESQDVSILKTADAILVPGGFGERGTEGKMKAIQYARENSIPFLGICLGMQLAVIEYARHVAGMPEASSTEFNRSTKYPLIGLITEWLDERGELQQRSLESDLGGTMRLGAQKSELVEGTKTREVYGKAEITERHRHRYEMNNRFIEAIEQAGMKISGYSSAQHLVETVEIPEHPWFIAVQFHPEFTSSPRDGHPLFASFIDAAKTQHQKSK</sequence>
<reference key="1">
    <citation type="journal article" date="2008" name="Antimicrob. Agents Chemother.">
        <title>Whole-genome pyrosequencing of an epidemic multidrug-resistant Acinetobacter baumannii strain belonging to the European clone II group.</title>
        <authorList>
            <person name="Iacono M."/>
            <person name="Villa L."/>
            <person name="Fortini D."/>
            <person name="Bordoni R."/>
            <person name="Imperi F."/>
            <person name="Bonnal R.J."/>
            <person name="Sicheritz-Ponten T."/>
            <person name="De Bellis G."/>
            <person name="Visca P."/>
            <person name="Cassone A."/>
            <person name="Carattoli A."/>
        </authorList>
    </citation>
    <scope>NUCLEOTIDE SEQUENCE [LARGE SCALE GENOMIC DNA]</scope>
    <source>
        <strain>ACICU</strain>
    </source>
</reference>
<gene>
    <name evidence="1" type="primary">pyrG</name>
    <name type="ordered locus">ACICU_02009</name>
</gene>
<proteinExistence type="inferred from homology"/>
<comment type="function">
    <text evidence="1">Catalyzes the ATP-dependent amination of UTP to CTP with either L-glutamine or ammonia as the source of nitrogen. Regulates intracellular CTP levels through interactions with the four ribonucleotide triphosphates.</text>
</comment>
<comment type="catalytic activity">
    <reaction evidence="1">
        <text>UTP + L-glutamine + ATP + H2O = CTP + L-glutamate + ADP + phosphate + 2 H(+)</text>
        <dbReference type="Rhea" id="RHEA:26426"/>
        <dbReference type="ChEBI" id="CHEBI:15377"/>
        <dbReference type="ChEBI" id="CHEBI:15378"/>
        <dbReference type="ChEBI" id="CHEBI:29985"/>
        <dbReference type="ChEBI" id="CHEBI:30616"/>
        <dbReference type="ChEBI" id="CHEBI:37563"/>
        <dbReference type="ChEBI" id="CHEBI:43474"/>
        <dbReference type="ChEBI" id="CHEBI:46398"/>
        <dbReference type="ChEBI" id="CHEBI:58359"/>
        <dbReference type="ChEBI" id="CHEBI:456216"/>
        <dbReference type="EC" id="6.3.4.2"/>
    </reaction>
</comment>
<comment type="catalytic activity">
    <reaction evidence="1">
        <text>L-glutamine + H2O = L-glutamate + NH4(+)</text>
        <dbReference type="Rhea" id="RHEA:15889"/>
        <dbReference type="ChEBI" id="CHEBI:15377"/>
        <dbReference type="ChEBI" id="CHEBI:28938"/>
        <dbReference type="ChEBI" id="CHEBI:29985"/>
        <dbReference type="ChEBI" id="CHEBI:58359"/>
    </reaction>
</comment>
<comment type="catalytic activity">
    <reaction evidence="1">
        <text>UTP + NH4(+) + ATP = CTP + ADP + phosphate + 2 H(+)</text>
        <dbReference type="Rhea" id="RHEA:16597"/>
        <dbReference type="ChEBI" id="CHEBI:15378"/>
        <dbReference type="ChEBI" id="CHEBI:28938"/>
        <dbReference type="ChEBI" id="CHEBI:30616"/>
        <dbReference type="ChEBI" id="CHEBI:37563"/>
        <dbReference type="ChEBI" id="CHEBI:43474"/>
        <dbReference type="ChEBI" id="CHEBI:46398"/>
        <dbReference type="ChEBI" id="CHEBI:456216"/>
    </reaction>
</comment>
<comment type="activity regulation">
    <text evidence="1">Allosterically activated by GTP, when glutamine is the substrate; GTP has no effect on the reaction when ammonia is the substrate. The allosteric effector GTP functions by stabilizing the protein conformation that binds the tetrahedral intermediate(s) formed during glutamine hydrolysis. Inhibited by the product CTP, via allosteric rather than competitive inhibition.</text>
</comment>
<comment type="pathway">
    <text evidence="1">Pyrimidine metabolism; CTP biosynthesis via de novo pathway; CTP from UDP: step 2/2.</text>
</comment>
<comment type="subunit">
    <text evidence="1">Homotetramer.</text>
</comment>
<comment type="miscellaneous">
    <text evidence="1">CTPSs have evolved a hybrid strategy for distinguishing between UTP and CTP. The overlapping regions of the product feedback inhibitory and substrate sites recognize a common feature in both compounds, the triphosphate moiety. To differentiate isosteric substrate and product pyrimidine rings, an additional pocket far from the expected kinase/ligase catalytic site, specifically recognizes the cytosine and ribose portions of the product inhibitor.</text>
</comment>
<comment type="similarity">
    <text evidence="1">Belongs to the CTP synthase family.</text>
</comment>
<name>PYRG_ACIBC</name>
<feature type="chain" id="PRO_1000139357" description="CTP synthase">
    <location>
        <begin position="1"/>
        <end position="545"/>
    </location>
</feature>
<feature type="domain" description="Glutamine amidotransferase type-1" evidence="1">
    <location>
        <begin position="292"/>
        <end position="543"/>
    </location>
</feature>
<feature type="region of interest" description="Amidoligase domain" evidence="1">
    <location>
        <begin position="1"/>
        <end position="266"/>
    </location>
</feature>
<feature type="active site" description="Nucleophile; for glutamine hydrolysis" evidence="1">
    <location>
        <position position="380"/>
    </location>
</feature>
<feature type="active site" evidence="1">
    <location>
        <position position="516"/>
    </location>
</feature>
<feature type="active site" evidence="1">
    <location>
        <position position="518"/>
    </location>
</feature>
<feature type="binding site" evidence="1">
    <location>
        <position position="13"/>
    </location>
    <ligand>
        <name>CTP</name>
        <dbReference type="ChEBI" id="CHEBI:37563"/>
        <note>allosteric inhibitor</note>
    </ligand>
</feature>
<feature type="binding site" evidence="1">
    <location>
        <position position="13"/>
    </location>
    <ligand>
        <name>UTP</name>
        <dbReference type="ChEBI" id="CHEBI:46398"/>
    </ligand>
</feature>
<feature type="binding site" evidence="1">
    <location>
        <begin position="14"/>
        <end position="19"/>
    </location>
    <ligand>
        <name>ATP</name>
        <dbReference type="ChEBI" id="CHEBI:30616"/>
    </ligand>
</feature>
<feature type="binding site" evidence="1">
    <location>
        <position position="71"/>
    </location>
    <ligand>
        <name>ATP</name>
        <dbReference type="ChEBI" id="CHEBI:30616"/>
    </ligand>
</feature>
<feature type="binding site" evidence="1">
    <location>
        <position position="71"/>
    </location>
    <ligand>
        <name>Mg(2+)</name>
        <dbReference type="ChEBI" id="CHEBI:18420"/>
    </ligand>
</feature>
<feature type="binding site" evidence="1">
    <location>
        <position position="140"/>
    </location>
    <ligand>
        <name>Mg(2+)</name>
        <dbReference type="ChEBI" id="CHEBI:18420"/>
    </ligand>
</feature>
<feature type="binding site" evidence="1">
    <location>
        <begin position="147"/>
        <end position="149"/>
    </location>
    <ligand>
        <name>CTP</name>
        <dbReference type="ChEBI" id="CHEBI:37563"/>
        <note>allosteric inhibitor</note>
    </ligand>
</feature>
<feature type="binding site" evidence="1">
    <location>
        <begin position="187"/>
        <end position="192"/>
    </location>
    <ligand>
        <name>CTP</name>
        <dbReference type="ChEBI" id="CHEBI:37563"/>
        <note>allosteric inhibitor</note>
    </ligand>
</feature>
<feature type="binding site" evidence="1">
    <location>
        <begin position="187"/>
        <end position="192"/>
    </location>
    <ligand>
        <name>UTP</name>
        <dbReference type="ChEBI" id="CHEBI:46398"/>
    </ligand>
</feature>
<feature type="binding site" evidence="1">
    <location>
        <position position="223"/>
    </location>
    <ligand>
        <name>CTP</name>
        <dbReference type="ChEBI" id="CHEBI:37563"/>
        <note>allosteric inhibitor</note>
    </ligand>
</feature>
<feature type="binding site" evidence="1">
    <location>
        <position position="223"/>
    </location>
    <ligand>
        <name>UTP</name>
        <dbReference type="ChEBI" id="CHEBI:46398"/>
    </ligand>
</feature>
<feature type="binding site" evidence="1">
    <location>
        <begin position="239"/>
        <end position="241"/>
    </location>
    <ligand>
        <name>ATP</name>
        <dbReference type="ChEBI" id="CHEBI:30616"/>
    </ligand>
</feature>
<feature type="binding site" evidence="1">
    <location>
        <position position="353"/>
    </location>
    <ligand>
        <name>L-glutamine</name>
        <dbReference type="ChEBI" id="CHEBI:58359"/>
    </ligand>
</feature>
<feature type="binding site" evidence="1">
    <location>
        <begin position="381"/>
        <end position="384"/>
    </location>
    <ligand>
        <name>L-glutamine</name>
        <dbReference type="ChEBI" id="CHEBI:58359"/>
    </ligand>
</feature>
<feature type="binding site" evidence="1">
    <location>
        <position position="404"/>
    </location>
    <ligand>
        <name>L-glutamine</name>
        <dbReference type="ChEBI" id="CHEBI:58359"/>
    </ligand>
</feature>
<feature type="binding site" evidence="1">
    <location>
        <position position="471"/>
    </location>
    <ligand>
        <name>L-glutamine</name>
        <dbReference type="ChEBI" id="CHEBI:58359"/>
    </ligand>
</feature>